<sequence>MYTLISIIGKYISCLPALLIVAFLTISERKTMASMQRRLGQNIVGYYGLLQAFADALKLLLKEYVAPTQANIILLFLGPIITLIFSLLGYRVIPYGSGLFISDFNLGILYILAVSSLATYGILLAGWSANSKYAFLGSLRSTAQLISYELLLRFYILLVILFTGSLNLTTIIESQKVVYFILPLLPIFLIFFIGCIAETNRAPFDLAEAESELVSGFMTEHSAVIFMIFFFLAQYASIVLICILSSVLFLGGYLNILPLNTYNVCDFNSLFSDYLINGLSSLNLAIKTAFLIFVFIWVRASFPRIRFDQLMSVCWTILLPIIIAYVVLLPCIVIGLNSSILLI</sequence>
<comment type="function">
    <text evidence="1">Core subunit of the mitochondrial membrane respiratory chain NADH dehydrogenase (Complex I) that is believed to belong to the minimal assembly required for catalysis. Complex I functions in the transfer of electrons from NADH to the respiratory chain. The immediate electron acceptor for the enzyme is believed to be ubiquinone (By similarity).</text>
</comment>
<comment type="catalytic activity">
    <reaction>
        <text>a ubiquinone + NADH + 5 H(+)(in) = a ubiquinol + NAD(+) + 4 H(+)(out)</text>
        <dbReference type="Rhea" id="RHEA:29091"/>
        <dbReference type="Rhea" id="RHEA-COMP:9565"/>
        <dbReference type="Rhea" id="RHEA-COMP:9566"/>
        <dbReference type="ChEBI" id="CHEBI:15378"/>
        <dbReference type="ChEBI" id="CHEBI:16389"/>
        <dbReference type="ChEBI" id="CHEBI:17976"/>
        <dbReference type="ChEBI" id="CHEBI:57540"/>
        <dbReference type="ChEBI" id="CHEBI:57945"/>
        <dbReference type="EC" id="7.1.1.2"/>
    </reaction>
</comment>
<comment type="subcellular location">
    <subcellularLocation>
        <location evidence="1">Mitochondrion inner membrane</location>
        <topology evidence="1">Multi-pass membrane protein</topology>
    </subcellularLocation>
</comment>
<comment type="similarity">
    <text evidence="3">Belongs to the complex I subunit 1 family.</text>
</comment>
<geneLocation type="mitochondrion"/>
<dbReference type="EC" id="7.1.1.2"/>
<dbReference type="EMBL" id="Y18476">
    <property type="protein sequence ID" value="CAA77189.1"/>
    <property type="molecule type" value="Genomic_DNA"/>
</dbReference>
<dbReference type="PIR" id="T14245">
    <property type="entry name" value="T14245"/>
</dbReference>
<dbReference type="SMR" id="Q9ZZ38"/>
<dbReference type="GO" id="GO:0005743">
    <property type="term" value="C:mitochondrial inner membrane"/>
    <property type="evidence" value="ECO:0007669"/>
    <property type="project" value="UniProtKB-SubCell"/>
</dbReference>
<dbReference type="GO" id="GO:0008137">
    <property type="term" value="F:NADH dehydrogenase (ubiquinone) activity"/>
    <property type="evidence" value="ECO:0007669"/>
    <property type="project" value="UniProtKB-EC"/>
</dbReference>
<dbReference type="GO" id="GO:0009060">
    <property type="term" value="P:aerobic respiration"/>
    <property type="evidence" value="ECO:0007669"/>
    <property type="project" value="TreeGrafter"/>
</dbReference>
<dbReference type="HAMAP" id="MF_01350">
    <property type="entry name" value="NDH1_NuoH"/>
    <property type="match status" value="1"/>
</dbReference>
<dbReference type="InterPro" id="IPR001694">
    <property type="entry name" value="NADH_UbQ_OxRdtase_su1/FPO"/>
</dbReference>
<dbReference type="InterPro" id="IPR018086">
    <property type="entry name" value="NADH_UbQ_OxRdtase_su1_CS"/>
</dbReference>
<dbReference type="PANTHER" id="PTHR11432">
    <property type="entry name" value="NADH DEHYDROGENASE SUBUNIT 1"/>
    <property type="match status" value="1"/>
</dbReference>
<dbReference type="PANTHER" id="PTHR11432:SF3">
    <property type="entry name" value="NADH-UBIQUINONE OXIDOREDUCTASE CHAIN 1"/>
    <property type="match status" value="1"/>
</dbReference>
<dbReference type="Pfam" id="PF00146">
    <property type="entry name" value="NADHdh"/>
    <property type="match status" value="1"/>
</dbReference>
<dbReference type="PROSITE" id="PS00667">
    <property type="entry name" value="COMPLEX1_ND1_1"/>
    <property type="match status" value="1"/>
</dbReference>
<dbReference type="PROSITE" id="PS00668">
    <property type="entry name" value="COMPLEX1_ND1_2"/>
    <property type="match status" value="1"/>
</dbReference>
<protein>
    <recommendedName>
        <fullName>NADH-ubiquinone oxidoreductase chain 1</fullName>
        <ecNumber>7.1.1.2</ecNumber>
    </recommendedName>
    <alternativeName>
        <fullName>NADH dehydrogenase subunit 1</fullName>
    </alternativeName>
</protein>
<name>NU1M_TRIRU</name>
<reference key="1">
    <citation type="journal article" date="1999" name="Curr. Genet.">
        <title>Organisation of the mitochondrial genome of Trichophyton rubrum III. DNA sequence analysis of the NADH dehydrogenase subunits 1, 2, 3, 4, 5 and the cytochrome b gene.</title>
        <authorList>
            <person name="de Bievre C."/>
            <person name="Dujon B."/>
        </authorList>
    </citation>
    <scope>NUCLEOTIDE SEQUENCE [GENOMIC DNA]</scope>
    <source>
        <strain>IP 1817.89</strain>
    </source>
</reference>
<proteinExistence type="inferred from homology"/>
<feature type="chain" id="PRO_0000117491" description="NADH-ubiquinone oxidoreductase chain 1">
    <location>
        <begin position="1"/>
        <end position="343"/>
    </location>
</feature>
<feature type="transmembrane region" description="Helical" evidence="2">
    <location>
        <begin position="4"/>
        <end position="24"/>
    </location>
</feature>
<feature type="transmembrane region" description="Helical" evidence="2">
    <location>
        <begin position="70"/>
        <end position="90"/>
    </location>
</feature>
<feature type="transmembrane region" description="Helical" evidence="2">
    <location>
        <begin position="106"/>
        <end position="126"/>
    </location>
</feature>
<feature type="transmembrane region" description="Helical" evidence="2">
    <location>
        <begin position="154"/>
        <end position="174"/>
    </location>
</feature>
<feature type="transmembrane region" description="Helical" evidence="2">
    <location>
        <begin position="177"/>
        <end position="197"/>
    </location>
</feature>
<feature type="transmembrane region" description="Helical" evidence="2">
    <location>
        <begin position="224"/>
        <end position="244"/>
    </location>
</feature>
<feature type="transmembrane region" description="Helical" evidence="2">
    <location>
        <begin position="278"/>
        <end position="298"/>
    </location>
</feature>
<feature type="transmembrane region" description="Helical" evidence="2">
    <location>
        <begin position="316"/>
        <end position="336"/>
    </location>
</feature>
<accession>Q9ZZ38</accession>
<organism>
    <name type="scientific">Trichophyton rubrum</name>
    <name type="common">Athlete's foot fungus</name>
    <name type="synonym">Epidermophyton rubrum</name>
    <dbReference type="NCBI Taxonomy" id="5551"/>
    <lineage>
        <taxon>Eukaryota</taxon>
        <taxon>Fungi</taxon>
        <taxon>Dikarya</taxon>
        <taxon>Ascomycota</taxon>
        <taxon>Pezizomycotina</taxon>
        <taxon>Eurotiomycetes</taxon>
        <taxon>Eurotiomycetidae</taxon>
        <taxon>Onygenales</taxon>
        <taxon>Arthrodermataceae</taxon>
        <taxon>Trichophyton</taxon>
    </lineage>
</organism>
<evidence type="ECO:0000250" key="1"/>
<evidence type="ECO:0000255" key="2"/>
<evidence type="ECO:0000305" key="3"/>
<gene>
    <name type="primary">ND1</name>
    <name type="synonym">NADH1</name>
</gene>
<keyword id="KW-0249">Electron transport</keyword>
<keyword id="KW-0472">Membrane</keyword>
<keyword id="KW-0496">Mitochondrion</keyword>
<keyword id="KW-0999">Mitochondrion inner membrane</keyword>
<keyword id="KW-0520">NAD</keyword>
<keyword id="KW-0679">Respiratory chain</keyword>
<keyword id="KW-1278">Translocase</keyword>
<keyword id="KW-0812">Transmembrane</keyword>
<keyword id="KW-1133">Transmembrane helix</keyword>
<keyword id="KW-0813">Transport</keyword>
<keyword id="KW-0830">Ubiquinone</keyword>